<sequence>MIGSLVATAFWAMLPAYVPNNAAVLAGGGRPIDGGRDWRGARLLGDGKTWRGTAVGTLTGVVLALALNRIAEPASAALGVDLPTFALPAAFALAFGAMCGDIGASFLKRRSGRERGAAFPGLDQLDFVVVALAAVFVVDTDWALAVFTPSVLVVVLVMTPILHVVTNVGAYALGLKNEPW</sequence>
<protein>
    <recommendedName>
        <fullName evidence="1">CDP-archaeol synthase</fullName>
        <ecNumber evidence="1">2.7.7.67</ecNumber>
    </recommendedName>
    <alternativeName>
        <fullName evidence="1">CDP-2,3-bis-(O-geranylgeranyl)-sn-glycerol synthase</fullName>
    </alternativeName>
</protein>
<proteinExistence type="inferred from homology"/>
<evidence type="ECO:0000255" key="1">
    <source>
        <dbReference type="HAMAP-Rule" id="MF_01117"/>
    </source>
</evidence>
<keyword id="KW-1003">Cell membrane</keyword>
<keyword id="KW-0444">Lipid biosynthesis</keyword>
<keyword id="KW-0443">Lipid metabolism</keyword>
<keyword id="KW-0460">Magnesium</keyword>
<keyword id="KW-0472">Membrane</keyword>
<keyword id="KW-0594">Phospholipid biosynthesis</keyword>
<keyword id="KW-1208">Phospholipid metabolism</keyword>
<keyword id="KW-1185">Reference proteome</keyword>
<keyword id="KW-0808">Transferase</keyword>
<keyword id="KW-0812">Transmembrane</keyword>
<keyword id="KW-1133">Transmembrane helix</keyword>
<organism>
    <name type="scientific">Halorubrum lacusprofundi (strain ATCC 49239 / DSM 5036 / JCM 8891 / ACAM 34)</name>
    <dbReference type="NCBI Taxonomy" id="416348"/>
    <lineage>
        <taxon>Archaea</taxon>
        <taxon>Methanobacteriati</taxon>
        <taxon>Methanobacteriota</taxon>
        <taxon>Stenosarchaea group</taxon>
        <taxon>Halobacteria</taxon>
        <taxon>Halobacteriales</taxon>
        <taxon>Haloferacaceae</taxon>
        <taxon>Halorubrum</taxon>
    </lineage>
</organism>
<accession>B9LSA9</accession>
<comment type="function">
    <text evidence="1">Catalyzes the formation of CDP-2,3-bis-(O-geranylgeranyl)-sn-glycerol (CDP-archaeol) from 2,3-bis-(O-geranylgeranyl)-sn-glycerol 1-phosphate (DGGGP) and CTP. This reaction is the third ether-bond-formation step in the biosynthesis of archaeal membrane lipids.</text>
</comment>
<comment type="catalytic activity">
    <reaction evidence="1">
        <text>2,3-bis-O-(geranylgeranyl)-sn-glycerol 1-phosphate + CTP + H(+) = CDP-2,3-bis-O-(geranylgeranyl)-sn-glycerol + diphosphate</text>
        <dbReference type="Rhea" id="RHEA:25690"/>
        <dbReference type="ChEBI" id="CHEBI:15378"/>
        <dbReference type="ChEBI" id="CHEBI:33019"/>
        <dbReference type="ChEBI" id="CHEBI:37563"/>
        <dbReference type="ChEBI" id="CHEBI:58837"/>
        <dbReference type="ChEBI" id="CHEBI:58838"/>
        <dbReference type="EC" id="2.7.7.67"/>
    </reaction>
</comment>
<comment type="cofactor">
    <cofactor evidence="1">
        <name>Mg(2+)</name>
        <dbReference type="ChEBI" id="CHEBI:18420"/>
    </cofactor>
</comment>
<comment type="pathway">
    <text evidence="1">Membrane lipid metabolism; glycerophospholipid metabolism.</text>
</comment>
<comment type="subcellular location">
    <subcellularLocation>
        <location evidence="1">Cell membrane</location>
        <topology evidence="1">Multi-pass membrane protein</topology>
    </subcellularLocation>
</comment>
<comment type="similarity">
    <text evidence="1">Belongs to the CDP-archaeol synthase family.</text>
</comment>
<dbReference type="EC" id="2.7.7.67" evidence="1"/>
<dbReference type="EMBL" id="CP001365">
    <property type="protein sequence ID" value="ACM55954.1"/>
    <property type="molecule type" value="Genomic_DNA"/>
</dbReference>
<dbReference type="RefSeq" id="WP_012659595.1">
    <property type="nucleotide sequence ID" value="NC_012029.1"/>
</dbReference>
<dbReference type="SMR" id="B9LSA9"/>
<dbReference type="GeneID" id="7399742"/>
<dbReference type="KEGG" id="hla:Hlac_0350"/>
<dbReference type="eggNOG" id="arCOG04106">
    <property type="taxonomic scope" value="Archaea"/>
</dbReference>
<dbReference type="HOGENOM" id="CLU_105710_0_0_2"/>
<dbReference type="UniPathway" id="UPA00940"/>
<dbReference type="Proteomes" id="UP000000740">
    <property type="component" value="Chromosome 1"/>
</dbReference>
<dbReference type="GO" id="GO:0005886">
    <property type="term" value="C:plasma membrane"/>
    <property type="evidence" value="ECO:0007669"/>
    <property type="project" value="UniProtKB-SubCell"/>
</dbReference>
<dbReference type="GO" id="GO:0043338">
    <property type="term" value="F:CDP-2,3-bis-(O-geranylgeranyl)-sn-glycerol synthase activity"/>
    <property type="evidence" value="ECO:0007669"/>
    <property type="project" value="UniProtKB-EC"/>
</dbReference>
<dbReference type="GO" id="GO:0046474">
    <property type="term" value="P:glycerophospholipid biosynthetic process"/>
    <property type="evidence" value="ECO:0007669"/>
    <property type="project" value="UniProtKB-UniRule"/>
</dbReference>
<dbReference type="HAMAP" id="MF_01117">
    <property type="entry name" value="CDP_archaeol_synth"/>
    <property type="match status" value="1"/>
</dbReference>
<dbReference type="InterPro" id="IPR032690">
    <property type="entry name" value="CarS"/>
</dbReference>
<dbReference type="InterPro" id="IPR002726">
    <property type="entry name" value="CarS_archaea"/>
</dbReference>
<dbReference type="NCBIfam" id="NF003114">
    <property type="entry name" value="PRK04032.1"/>
    <property type="match status" value="1"/>
</dbReference>
<dbReference type="PANTHER" id="PTHR39650">
    <property type="entry name" value="CDP-ARCHAEOL SYNTHASE"/>
    <property type="match status" value="1"/>
</dbReference>
<dbReference type="PANTHER" id="PTHR39650:SF1">
    <property type="entry name" value="CDP-ARCHAEOL SYNTHASE"/>
    <property type="match status" value="1"/>
</dbReference>
<dbReference type="Pfam" id="PF01864">
    <property type="entry name" value="CarS-like"/>
    <property type="match status" value="1"/>
</dbReference>
<gene>
    <name evidence="1" type="primary">carS</name>
    <name type="ordered locus">Hlac_0350</name>
</gene>
<feature type="chain" id="PRO_1000164037" description="CDP-archaeol synthase">
    <location>
        <begin position="1"/>
        <end position="180"/>
    </location>
</feature>
<feature type="transmembrane region" description="Helical" evidence="1">
    <location>
        <begin position="5"/>
        <end position="25"/>
    </location>
</feature>
<feature type="transmembrane region" description="Helical" evidence="1">
    <location>
        <begin position="54"/>
        <end position="74"/>
    </location>
</feature>
<feature type="transmembrane region" description="Helical" evidence="1">
    <location>
        <begin position="78"/>
        <end position="98"/>
    </location>
</feature>
<feature type="transmembrane region" description="Helical" evidence="1">
    <location>
        <begin position="118"/>
        <end position="138"/>
    </location>
</feature>
<feature type="transmembrane region" description="Helical" evidence="1">
    <location>
        <begin position="142"/>
        <end position="162"/>
    </location>
</feature>
<name>CDPAS_HALLT</name>
<reference key="1">
    <citation type="journal article" date="2016" name="Stand. Genomic Sci.">
        <title>Complete genome sequence of the Antarctic Halorubrum lacusprofundi type strain ACAM 34.</title>
        <authorList>
            <person name="Anderson I.J."/>
            <person name="DasSarma P."/>
            <person name="Lucas S."/>
            <person name="Copeland A."/>
            <person name="Lapidus A."/>
            <person name="Del Rio T.G."/>
            <person name="Tice H."/>
            <person name="Dalin E."/>
            <person name="Bruce D.C."/>
            <person name="Goodwin L."/>
            <person name="Pitluck S."/>
            <person name="Sims D."/>
            <person name="Brettin T.S."/>
            <person name="Detter J.C."/>
            <person name="Han C.S."/>
            <person name="Larimer F."/>
            <person name="Hauser L."/>
            <person name="Land M."/>
            <person name="Ivanova N."/>
            <person name="Richardson P."/>
            <person name="Cavicchioli R."/>
            <person name="DasSarma S."/>
            <person name="Woese C.R."/>
            <person name="Kyrpides N.C."/>
        </authorList>
    </citation>
    <scope>NUCLEOTIDE SEQUENCE [LARGE SCALE GENOMIC DNA]</scope>
    <source>
        <strain>ATCC 49239 / DSM 5036 / JCM 8891 / ACAM 34</strain>
    </source>
</reference>